<organism>
    <name type="scientific">Ascobolus immersus</name>
    <dbReference type="NCBI Taxonomy" id="5191"/>
    <lineage>
        <taxon>Eukaryota</taxon>
        <taxon>Fungi</taxon>
        <taxon>Dikarya</taxon>
        <taxon>Ascomycota</taxon>
        <taxon>Pezizomycotina</taxon>
        <taxon>Pezizomycetes</taxon>
        <taxon>Pezizales</taxon>
        <taxon>Ascobolaceae</taxon>
        <taxon>Ascobolus</taxon>
    </lineage>
</organism>
<feature type="chain" id="PRO_0000195996" description="Histone H1">
    <location>
        <begin position="1"/>
        <end position="213"/>
    </location>
</feature>
<feature type="domain" description="H15" evidence="1">
    <location>
        <begin position="26"/>
        <end position="97"/>
    </location>
</feature>
<feature type="region of interest" description="Disordered" evidence="2">
    <location>
        <begin position="1"/>
        <end position="30"/>
    </location>
</feature>
<feature type="region of interest" description="Disordered" evidence="2">
    <location>
        <begin position="81"/>
        <end position="213"/>
    </location>
</feature>
<feature type="compositionally biased region" description="Low complexity" evidence="2">
    <location>
        <begin position="1"/>
        <end position="25"/>
    </location>
</feature>
<feature type="compositionally biased region" description="Low complexity" evidence="2">
    <location>
        <begin position="102"/>
        <end position="113"/>
    </location>
</feature>
<feature type="compositionally biased region" description="Low complexity" evidence="2">
    <location>
        <begin position="123"/>
        <end position="137"/>
    </location>
</feature>
<feature type="compositionally biased region" description="Low complexity" evidence="2">
    <location>
        <begin position="157"/>
        <end position="176"/>
    </location>
</feature>
<feature type="compositionally biased region" description="Low complexity" evidence="2">
    <location>
        <begin position="203"/>
        <end position="213"/>
    </location>
</feature>
<proteinExistence type="inferred from homology"/>
<sequence>MAAATASAAATPAKKAAPKKPAAAPEHPSYKEMLTKAITELKERNGSSRQAIKKFIQSNFKVKDNFDVQFNQALRRGVEKGEFVQPKGPSGTVKLAKKEKAAAAPKKPAAKKAAAPKKDAAPKKAAAPKKAAAPKSAAAKKKLLDAKKAAAKKPAAKKAAAPKKVAAPVEKPAPVKTTTTKSGRVTKASTTSKPAPKKKAAAPKKAATPAKSS</sequence>
<keyword id="KW-0158">Chromosome</keyword>
<keyword id="KW-0238">DNA-binding</keyword>
<keyword id="KW-0539">Nucleus</keyword>
<accession>Q9UV33</accession>
<reference key="1">
    <citation type="journal article" date="2000" name="Mol. Cell. Biol.">
        <title>Histone H1 is dispensable for methylation-associated gene silencing in Ascobolus immersus and essential for long life span.</title>
        <authorList>
            <person name="Barra J.L."/>
            <person name="Rhounim L."/>
            <person name="Rossignol J.-L."/>
            <person name="Faugeron G."/>
        </authorList>
    </citation>
    <scope>NUCLEOTIDE SEQUENCE [GENOMIC DNA]</scope>
    <source>
        <strain>RN42</strain>
    </source>
</reference>
<name>H1_ASCIM</name>
<protein>
    <recommendedName>
        <fullName>Histone H1</fullName>
    </recommendedName>
</protein>
<evidence type="ECO:0000255" key="1">
    <source>
        <dbReference type="PROSITE-ProRule" id="PRU00837"/>
    </source>
</evidence>
<evidence type="ECO:0000256" key="2">
    <source>
        <dbReference type="SAM" id="MobiDB-lite"/>
    </source>
</evidence>
<dbReference type="EMBL" id="AF190622">
    <property type="protein sequence ID" value="AAF16011.1"/>
    <property type="molecule type" value="Genomic_DNA"/>
</dbReference>
<dbReference type="SMR" id="Q9UV33"/>
<dbReference type="GO" id="GO:0000786">
    <property type="term" value="C:nucleosome"/>
    <property type="evidence" value="ECO:0007669"/>
    <property type="project" value="InterPro"/>
</dbReference>
<dbReference type="GO" id="GO:0005634">
    <property type="term" value="C:nucleus"/>
    <property type="evidence" value="ECO:0007669"/>
    <property type="project" value="UniProtKB-SubCell"/>
</dbReference>
<dbReference type="GO" id="GO:0003690">
    <property type="term" value="F:double-stranded DNA binding"/>
    <property type="evidence" value="ECO:0007669"/>
    <property type="project" value="TreeGrafter"/>
</dbReference>
<dbReference type="GO" id="GO:0031492">
    <property type="term" value="F:nucleosomal DNA binding"/>
    <property type="evidence" value="ECO:0007669"/>
    <property type="project" value="TreeGrafter"/>
</dbReference>
<dbReference type="GO" id="GO:0030527">
    <property type="term" value="F:structural constituent of chromatin"/>
    <property type="evidence" value="ECO:0007669"/>
    <property type="project" value="InterPro"/>
</dbReference>
<dbReference type="GO" id="GO:0030261">
    <property type="term" value="P:chromosome condensation"/>
    <property type="evidence" value="ECO:0007669"/>
    <property type="project" value="TreeGrafter"/>
</dbReference>
<dbReference type="GO" id="GO:0045910">
    <property type="term" value="P:negative regulation of DNA recombination"/>
    <property type="evidence" value="ECO:0007669"/>
    <property type="project" value="TreeGrafter"/>
</dbReference>
<dbReference type="GO" id="GO:0006334">
    <property type="term" value="P:nucleosome assembly"/>
    <property type="evidence" value="ECO:0007669"/>
    <property type="project" value="InterPro"/>
</dbReference>
<dbReference type="CDD" id="cd00073">
    <property type="entry name" value="H15"/>
    <property type="match status" value="1"/>
</dbReference>
<dbReference type="FunFam" id="1.10.10.10:FF:000140">
    <property type="entry name" value="Histone H1.0"/>
    <property type="match status" value="1"/>
</dbReference>
<dbReference type="Gene3D" id="1.10.10.10">
    <property type="entry name" value="Winged helix-like DNA-binding domain superfamily/Winged helix DNA-binding domain"/>
    <property type="match status" value="1"/>
</dbReference>
<dbReference type="InterPro" id="IPR005819">
    <property type="entry name" value="H1/H5"/>
</dbReference>
<dbReference type="InterPro" id="IPR005818">
    <property type="entry name" value="Histone_H1/H5_H15"/>
</dbReference>
<dbReference type="InterPro" id="IPR036388">
    <property type="entry name" value="WH-like_DNA-bd_sf"/>
</dbReference>
<dbReference type="InterPro" id="IPR036390">
    <property type="entry name" value="WH_DNA-bd_sf"/>
</dbReference>
<dbReference type="PANTHER" id="PTHR11467:SF36">
    <property type="entry name" value="HISTONE 24-RELATED"/>
    <property type="match status" value="1"/>
</dbReference>
<dbReference type="PANTHER" id="PTHR11467">
    <property type="entry name" value="HISTONE H1"/>
    <property type="match status" value="1"/>
</dbReference>
<dbReference type="Pfam" id="PF00538">
    <property type="entry name" value="Linker_histone"/>
    <property type="match status" value="1"/>
</dbReference>
<dbReference type="PRINTS" id="PR00624">
    <property type="entry name" value="HISTONEH5"/>
</dbReference>
<dbReference type="SMART" id="SM00526">
    <property type="entry name" value="H15"/>
    <property type="match status" value="1"/>
</dbReference>
<dbReference type="SUPFAM" id="SSF46785">
    <property type="entry name" value="Winged helix' DNA-binding domain"/>
    <property type="match status" value="1"/>
</dbReference>
<dbReference type="PROSITE" id="PS51504">
    <property type="entry name" value="H15"/>
    <property type="match status" value="1"/>
</dbReference>
<comment type="function">
    <text>Could act as an H1-type linker histone.</text>
</comment>
<comment type="subcellular location">
    <subcellularLocation>
        <location evidence="1">Nucleus</location>
    </subcellularLocation>
    <subcellularLocation>
        <location evidence="1">Chromosome</location>
    </subcellularLocation>
</comment>
<comment type="similarity">
    <text evidence="1">Belongs to the histone H1/H5 family.</text>
</comment>